<comment type="function">
    <text evidence="1">Catalyzes the phosphorylation of D-glucose to D-glucose 6-phosphate using ADP as the phosphate donor. GDP and CDP can replace ADP, but with reduced efficiency (By similarity).</text>
</comment>
<comment type="catalytic activity">
    <reaction>
        <text>D-glucose + ADP = D-glucose 6-phosphate + AMP + H(+)</text>
        <dbReference type="Rhea" id="RHEA:11460"/>
        <dbReference type="ChEBI" id="CHEBI:4167"/>
        <dbReference type="ChEBI" id="CHEBI:15378"/>
        <dbReference type="ChEBI" id="CHEBI:61548"/>
        <dbReference type="ChEBI" id="CHEBI:456215"/>
        <dbReference type="ChEBI" id="CHEBI:456216"/>
        <dbReference type="EC" id="2.7.1.147"/>
    </reaction>
</comment>
<comment type="cofactor">
    <cofactor evidence="3">
        <name>Mg(2+)</name>
        <dbReference type="ChEBI" id="CHEBI:18420"/>
    </cofactor>
    <text evidence="3">Binds 1 Mg(2+) ion per subunit.</text>
</comment>
<comment type="pathway">
    <text evidence="3">Carbohydrate degradation; glycolysis.</text>
</comment>
<comment type="subunit">
    <text evidence="1">Monomer.</text>
</comment>
<comment type="subcellular location">
    <subcellularLocation>
        <location evidence="10">Secreted</location>
    </subcellularLocation>
</comment>
<comment type="alternative products">
    <event type="alternative splicing"/>
    <isoform>
        <id>Q9BRR6-1</id>
        <name>1</name>
        <sequence type="displayed"/>
    </isoform>
    <isoform>
        <id>Q9BRR6-2</id>
        <name>2</name>
        <sequence type="described" ref="VSP_013552"/>
    </isoform>
    <isoform>
        <id>Q9BRR6-3</id>
        <name>3</name>
        <sequence type="described" ref="VSP_013549"/>
    </isoform>
    <isoform>
        <id>Q9BRR6-4</id>
        <name>4</name>
        <sequence type="described" ref="VSP_013550 VSP_013551 VSP_013552"/>
    </isoform>
    <isoform>
        <id>Q9BRR6-5</id>
        <name>5</name>
        <sequence type="described" ref="VSP_013548 VSP_013553 VSP_013554"/>
    </isoform>
    <isoform>
        <id>Q9BRR6-6</id>
        <name>6</name>
        <sequence type="described" ref="VSP_035014"/>
    </isoform>
</comment>
<comment type="similarity">
    <text evidence="10">Belongs to the ADP-dependent glucokinase family.</text>
</comment>
<reference key="1">
    <citation type="submission" date="1999-11" db="EMBL/GenBank/DDBJ databases">
        <title>RbBP-35 interacted with pRb.</title>
        <authorList>
            <person name="Fan Z.S."/>
            <person name="Ao S.Z."/>
        </authorList>
    </citation>
    <scope>NUCLEOTIDE SEQUENCE [MRNA] (ISOFORM 5)</scope>
    <source>
        <tissue>Lymph node</tissue>
    </source>
</reference>
<reference key="2">
    <citation type="journal article" date="2001" name="Genome Res.">
        <title>Towards a catalog of human genes and proteins: sequencing and analysis of 500 novel complete protein coding human cDNAs.</title>
        <authorList>
            <person name="Wiemann S."/>
            <person name="Weil B."/>
            <person name="Wellenreuther R."/>
            <person name="Gassenhuber J."/>
            <person name="Glassl S."/>
            <person name="Ansorge W."/>
            <person name="Boecher M."/>
            <person name="Bloecker H."/>
            <person name="Bauersachs S."/>
            <person name="Blum H."/>
            <person name="Lauber J."/>
            <person name="Duesterhoeft A."/>
            <person name="Beyer A."/>
            <person name="Koehrer K."/>
            <person name="Strack N."/>
            <person name="Mewes H.-W."/>
            <person name="Ottenwaelder B."/>
            <person name="Obermaier B."/>
            <person name="Tampe J."/>
            <person name="Heubner D."/>
            <person name="Wambutt R."/>
            <person name="Korn B."/>
            <person name="Klein M."/>
            <person name="Poustka A."/>
        </authorList>
    </citation>
    <scope>NUCLEOTIDE SEQUENCE [LARGE SCALE MRNA] (ISOFORM 4)</scope>
    <source>
        <tissue>Testis</tissue>
    </source>
</reference>
<reference key="3">
    <citation type="journal article" date="2004" name="Nat. Genet.">
        <title>Complete sequencing and characterization of 21,243 full-length human cDNAs.</title>
        <authorList>
            <person name="Ota T."/>
            <person name="Suzuki Y."/>
            <person name="Nishikawa T."/>
            <person name="Otsuki T."/>
            <person name="Sugiyama T."/>
            <person name="Irie R."/>
            <person name="Wakamatsu A."/>
            <person name="Hayashi K."/>
            <person name="Sato H."/>
            <person name="Nagai K."/>
            <person name="Kimura K."/>
            <person name="Makita H."/>
            <person name="Sekine M."/>
            <person name="Obayashi M."/>
            <person name="Nishi T."/>
            <person name="Shibahara T."/>
            <person name="Tanaka T."/>
            <person name="Ishii S."/>
            <person name="Yamamoto J."/>
            <person name="Saito K."/>
            <person name="Kawai Y."/>
            <person name="Isono Y."/>
            <person name="Nakamura Y."/>
            <person name="Nagahari K."/>
            <person name="Murakami K."/>
            <person name="Yasuda T."/>
            <person name="Iwayanagi T."/>
            <person name="Wagatsuma M."/>
            <person name="Shiratori A."/>
            <person name="Sudo H."/>
            <person name="Hosoiri T."/>
            <person name="Kaku Y."/>
            <person name="Kodaira H."/>
            <person name="Kondo H."/>
            <person name="Sugawara M."/>
            <person name="Takahashi M."/>
            <person name="Kanda K."/>
            <person name="Yokoi T."/>
            <person name="Furuya T."/>
            <person name="Kikkawa E."/>
            <person name="Omura Y."/>
            <person name="Abe K."/>
            <person name="Kamihara K."/>
            <person name="Katsuta N."/>
            <person name="Sato K."/>
            <person name="Tanikawa M."/>
            <person name="Yamazaki M."/>
            <person name="Ninomiya K."/>
            <person name="Ishibashi T."/>
            <person name="Yamashita H."/>
            <person name="Murakawa K."/>
            <person name="Fujimori K."/>
            <person name="Tanai H."/>
            <person name="Kimata M."/>
            <person name="Watanabe M."/>
            <person name="Hiraoka S."/>
            <person name="Chiba Y."/>
            <person name="Ishida S."/>
            <person name="Ono Y."/>
            <person name="Takiguchi S."/>
            <person name="Watanabe S."/>
            <person name="Yosida M."/>
            <person name="Hotuta T."/>
            <person name="Kusano J."/>
            <person name="Kanehori K."/>
            <person name="Takahashi-Fujii A."/>
            <person name="Hara H."/>
            <person name="Tanase T.-O."/>
            <person name="Nomura Y."/>
            <person name="Togiya S."/>
            <person name="Komai F."/>
            <person name="Hara R."/>
            <person name="Takeuchi K."/>
            <person name="Arita M."/>
            <person name="Imose N."/>
            <person name="Musashino K."/>
            <person name="Yuuki H."/>
            <person name="Oshima A."/>
            <person name="Sasaki N."/>
            <person name="Aotsuka S."/>
            <person name="Yoshikawa Y."/>
            <person name="Matsunawa H."/>
            <person name="Ichihara T."/>
            <person name="Shiohata N."/>
            <person name="Sano S."/>
            <person name="Moriya S."/>
            <person name="Momiyama H."/>
            <person name="Satoh N."/>
            <person name="Takami S."/>
            <person name="Terashima Y."/>
            <person name="Suzuki O."/>
            <person name="Nakagawa S."/>
            <person name="Senoh A."/>
            <person name="Mizoguchi H."/>
            <person name="Goto Y."/>
            <person name="Shimizu F."/>
            <person name="Wakebe H."/>
            <person name="Hishigaki H."/>
            <person name="Watanabe T."/>
            <person name="Sugiyama A."/>
            <person name="Takemoto M."/>
            <person name="Kawakami B."/>
            <person name="Yamazaki M."/>
            <person name="Watanabe K."/>
            <person name="Kumagai A."/>
            <person name="Itakura S."/>
            <person name="Fukuzumi Y."/>
            <person name="Fujimori Y."/>
            <person name="Komiyama M."/>
            <person name="Tashiro H."/>
            <person name="Tanigami A."/>
            <person name="Fujiwara T."/>
            <person name="Ono T."/>
            <person name="Yamada K."/>
            <person name="Fujii Y."/>
            <person name="Ozaki K."/>
            <person name="Hirao M."/>
            <person name="Ohmori Y."/>
            <person name="Kawabata A."/>
            <person name="Hikiji T."/>
            <person name="Kobatake N."/>
            <person name="Inagaki H."/>
            <person name="Ikema Y."/>
            <person name="Okamoto S."/>
            <person name="Okitani R."/>
            <person name="Kawakami T."/>
            <person name="Noguchi S."/>
            <person name="Itoh T."/>
            <person name="Shigeta K."/>
            <person name="Senba T."/>
            <person name="Matsumura K."/>
            <person name="Nakajima Y."/>
            <person name="Mizuno T."/>
            <person name="Morinaga M."/>
            <person name="Sasaki M."/>
            <person name="Togashi T."/>
            <person name="Oyama M."/>
            <person name="Hata H."/>
            <person name="Watanabe M."/>
            <person name="Komatsu T."/>
            <person name="Mizushima-Sugano J."/>
            <person name="Satoh T."/>
            <person name="Shirai Y."/>
            <person name="Takahashi Y."/>
            <person name="Nakagawa K."/>
            <person name="Okumura K."/>
            <person name="Nagase T."/>
            <person name="Nomura N."/>
            <person name="Kikuchi H."/>
            <person name="Masuho Y."/>
            <person name="Yamashita R."/>
            <person name="Nakai K."/>
            <person name="Yada T."/>
            <person name="Nakamura Y."/>
            <person name="Ohara O."/>
            <person name="Isogai T."/>
            <person name="Sugano S."/>
        </authorList>
    </citation>
    <scope>NUCLEOTIDE SEQUENCE [LARGE SCALE MRNA] (ISOFORM 3)</scope>
    <source>
        <tissue>Heart</tissue>
    </source>
</reference>
<reference key="4">
    <citation type="submission" date="2004-06" db="EMBL/GenBank/DDBJ databases">
        <title>Cloning of human full open reading frames in Gateway(TM) system entry vector (pDONR201).</title>
        <authorList>
            <person name="Ebert L."/>
            <person name="Schick M."/>
            <person name="Neubert P."/>
            <person name="Schatten R."/>
            <person name="Henze S."/>
            <person name="Korn B."/>
        </authorList>
    </citation>
    <scope>NUCLEOTIDE SEQUENCE [LARGE SCALE MRNA] (ISOFORM 4)</scope>
</reference>
<reference key="5">
    <citation type="journal article" date="2005" name="DNA Res.">
        <title>Signal sequence and keyword trap in silico for selection of full-length human cDNAs encoding secretion or membrane proteins from oligo-capped cDNA libraries.</title>
        <authorList>
            <person name="Otsuki T."/>
            <person name="Ota T."/>
            <person name="Nishikawa T."/>
            <person name="Hayashi K."/>
            <person name="Suzuki Y."/>
            <person name="Yamamoto J."/>
            <person name="Wakamatsu A."/>
            <person name="Kimura K."/>
            <person name="Sakamoto K."/>
            <person name="Hatano N."/>
            <person name="Kawai Y."/>
            <person name="Ishii S."/>
            <person name="Saito K."/>
            <person name="Kojima S."/>
            <person name="Sugiyama T."/>
            <person name="Ono T."/>
            <person name="Okano K."/>
            <person name="Yoshikawa Y."/>
            <person name="Aotsuka S."/>
            <person name="Sasaki N."/>
            <person name="Hattori A."/>
            <person name="Okumura K."/>
            <person name="Nagai K."/>
            <person name="Sugano S."/>
            <person name="Isogai T."/>
        </authorList>
    </citation>
    <scope>NUCLEOTIDE SEQUENCE [LARGE SCALE MRNA] (ISOFORM 2)</scope>
    <source>
        <tissue>Teratocarcinoma</tissue>
    </source>
</reference>
<reference key="6">
    <citation type="journal article" date="2004" name="Genome Res.">
        <title>The status, quality, and expansion of the NIH full-length cDNA project: the Mammalian Gene Collection (MGC).</title>
        <authorList>
            <consortium name="The MGC Project Team"/>
        </authorList>
    </citation>
    <scope>NUCLEOTIDE SEQUENCE [LARGE SCALE MRNA] (ISOFORMS 1 AND 6)</scope>
    <source>
        <tissue>Brain</tissue>
        <tissue>Kidney</tissue>
    </source>
</reference>
<reference key="7">
    <citation type="journal article" date="2011" name="BMC Syst. Biol.">
        <title>Initial characterization of the human central proteome.</title>
        <authorList>
            <person name="Burkard T.R."/>
            <person name="Planyavsky M."/>
            <person name="Kaupe I."/>
            <person name="Breitwieser F.P."/>
            <person name="Buerckstuemmer T."/>
            <person name="Bennett K.L."/>
            <person name="Superti-Furga G."/>
            <person name="Colinge J."/>
        </authorList>
    </citation>
    <scope>IDENTIFICATION BY MASS SPECTROMETRY [LARGE SCALE ANALYSIS]</scope>
</reference>
<reference key="8">
    <citation type="journal article" date="2015" name="Proteomics">
        <title>N-terminome analysis of the human mitochondrial proteome.</title>
        <authorList>
            <person name="Vaca Jacome A.S."/>
            <person name="Rabilloud T."/>
            <person name="Schaeffer-Reiss C."/>
            <person name="Rompais M."/>
            <person name="Ayoub D."/>
            <person name="Lane L."/>
            <person name="Bairoch A."/>
            <person name="Van Dorsselaer A."/>
            <person name="Carapito C."/>
        </authorList>
    </citation>
    <scope>IDENTIFICATION BY MASS SPECTROMETRY [LARGE SCALE ANALYSIS]</scope>
</reference>
<keyword id="KW-0025">Alternative splicing</keyword>
<keyword id="KW-0324">Glycolysis</keyword>
<keyword id="KW-0418">Kinase</keyword>
<keyword id="KW-0460">Magnesium</keyword>
<keyword id="KW-0479">Metal-binding</keyword>
<keyword id="KW-1267">Proteomics identification</keyword>
<keyword id="KW-1185">Reference proteome</keyword>
<keyword id="KW-0964">Secreted</keyword>
<keyword id="KW-0732">Signal</keyword>
<keyword id="KW-0808">Transferase</keyword>
<dbReference type="EC" id="2.7.1.147"/>
<dbReference type="EMBL" id="AF204270">
    <property type="protein sequence ID" value="AAL31473.1"/>
    <property type="molecule type" value="mRNA"/>
</dbReference>
<dbReference type="EMBL" id="AL136873">
    <property type="protein sequence ID" value="CAB66807.1"/>
    <property type="molecule type" value="mRNA"/>
</dbReference>
<dbReference type="EMBL" id="AK055526">
    <property type="protein sequence ID" value="BAB70941.1"/>
    <property type="molecule type" value="mRNA"/>
</dbReference>
<dbReference type="EMBL" id="CR533447">
    <property type="protein sequence ID" value="CAG38478.1"/>
    <property type="molecule type" value="mRNA"/>
</dbReference>
<dbReference type="EMBL" id="AK075560">
    <property type="protein sequence ID" value="BAC11699.1"/>
    <property type="molecule type" value="mRNA"/>
</dbReference>
<dbReference type="EMBL" id="BC006112">
    <property type="protein sequence ID" value="AAH06112.1"/>
    <property type="molecule type" value="mRNA"/>
</dbReference>
<dbReference type="EMBL" id="BC018074">
    <property type="protein sequence ID" value="AAH18074.1"/>
    <property type="molecule type" value="mRNA"/>
</dbReference>
<dbReference type="CCDS" id="CCDS42057.1">
    <molecule id="Q9BRR6-2"/>
</dbReference>
<dbReference type="CCDS" id="CCDS92041.1">
    <molecule id="Q9BRR6-1"/>
</dbReference>
<dbReference type="RefSeq" id="NP_001352153.1">
    <molecule id="Q9BRR6-3"/>
    <property type="nucleotide sequence ID" value="NM_001365224.1"/>
</dbReference>
<dbReference type="RefSeq" id="NP_001352154.1">
    <molecule id="Q9BRR6-1"/>
    <property type="nucleotide sequence ID" value="NM_001365225.1"/>
</dbReference>
<dbReference type="RefSeq" id="NP_001352158.1">
    <molecule id="Q9BRR6-3"/>
    <property type="nucleotide sequence ID" value="NM_001365229.1"/>
</dbReference>
<dbReference type="RefSeq" id="NP_112574.3">
    <molecule id="Q9BRR6-2"/>
    <property type="nucleotide sequence ID" value="NM_031284.4"/>
</dbReference>
<dbReference type="RefSeq" id="XP_006720775.1">
    <property type="nucleotide sequence ID" value="XM_006720712.3"/>
</dbReference>
<dbReference type="SMR" id="Q9BRR6"/>
<dbReference type="BioGRID" id="123643">
    <property type="interactions" value="106"/>
</dbReference>
<dbReference type="FunCoup" id="Q9BRR6">
    <property type="interactions" value="1845"/>
</dbReference>
<dbReference type="IntAct" id="Q9BRR6">
    <property type="interactions" value="63"/>
</dbReference>
<dbReference type="MINT" id="Q9BRR6"/>
<dbReference type="STRING" id="9606.ENSP00000312250"/>
<dbReference type="GlyGen" id="Q9BRR6">
    <property type="glycosylation" value="1 site, 1 O-linked glycan (1 site)"/>
</dbReference>
<dbReference type="iPTMnet" id="Q9BRR6"/>
<dbReference type="MetOSite" id="Q9BRR6"/>
<dbReference type="PhosphoSitePlus" id="Q9BRR6"/>
<dbReference type="SwissPalm" id="Q9BRR6"/>
<dbReference type="BioMuta" id="ADPGK"/>
<dbReference type="DMDM" id="62899887"/>
<dbReference type="jPOST" id="Q9BRR6"/>
<dbReference type="MassIVE" id="Q9BRR6"/>
<dbReference type="PaxDb" id="9606-ENSP00000312250"/>
<dbReference type="PeptideAtlas" id="Q9BRR6"/>
<dbReference type="ProteomicsDB" id="78812">
    <molecule id="Q9BRR6-1"/>
</dbReference>
<dbReference type="ProteomicsDB" id="78813">
    <molecule id="Q9BRR6-2"/>
</dbReference>
<dbReference type="ProteomicsDB" id="78814">
    <molecule id="Q9BRR6-3"/>
</dbReference>
<dbReference type="ProteomicsDB" id="78815">
    <molecule id="Q9BRR6-4"/>
</dbReference>
<dbReference type="ProteomicsDB" id="78816">
    <molecule id="Q9BRR6-5"/>
</dbReference>
<dbReference type="ProteomicsDB" id="78817">
    <molecule id="Q9BRR6-6"/>
</dbReference>
<dbReference type="Pumba" id="Q9BRR6"/>
<dbReference type="Antibodypedia" id="26747">
    <property type="antibodies" value="214 antibodies from 30 providers"/>
</dbReference>
<dbReference type="DNASU" id="83440"/>
<dbReference type="Ensembl" id="ENST00000311669.12">
    <molecule id="Q9BRR6-2"/>
    <property type="protein sequence ID" value="ENSP00000312250.8"/>
    <property type="gene ID" value="ENSG00000159322.18"/>
</dbReference>
<dbReference type="Ensembl" id="ENST00000456471.3">
    <molecule id="Q9BRR6-1"/>
    <property type="protein sequence ID" value="ENSP00000397694.3"/>
    <property type="gene ID" value="ENSG00000159322.18"/>
</dbReference>
<dbReference type="Ensembl" id="ENST00000562823.1">
    <molecule id="Q9BRR6-6"/>
    <property type="protein sequence ID" value="ENSP00000454367.1"/>
    <property type="gene ID" value="ENSG00000159322.18"/>
</dbReference>
<dbReference type="Ensembl" id="ENST00000567941.5">
    <molecule id="Q9BRR6-6"/>
    <property type="protein sequence ID" value="ENSP00000458102.1"/>
    <property type="gene ID" value="ENSG00000159322.18"/>
</dbReference>
<dbReference type="Ensembl" id="ENST00000569517.5">
    <molecule id="Q9BRR6-6"/>
    <property type="protein sequence ID" value="ENSP00000454304.1"/>
    <property type="gene ID" value="ENSG00000159322.18"/>
</dbReference>
<dbReference type="GeneID" id="83440"/>
<dbReference type="KEGG" id="hsa:83440"/>
<dbReference type="MANE-Select" id="ENST00000456471.3">
    <property type="protein sequence ID" value="ENSP00000397694.3"/>
    <property type="RefSeq nucleotide sequence ID" value="NM_001365225.1"/>
    <property type="RefSeq protein sequence ID" value="NP_001352154.1"/>
</dbReference>
<dbReference type="UCSC" id="uc002avf.5">
    <molecule id="Q9BRR6-1"/>
    <property type="organism name" value="human"/>
</dbReference>
<dbReference type="AGR" id="HGNC:25250"/>
<dbReference type="CTD" id="83440"/>
<dbReference type="DisGeNET" id="83440"/>
<dbReference type="GeneCards" id="ADPGK"/>
<dbReference type="HGNC" id="HGNC:25250">
    <property type="gene designation" value="ADPGK"/>
</dbReference>
<dbReference type="HPA" id="ENSG00000159322">
    <property type="expression patterns" value="Low tissue specificity"/>
</dbReference>
<dbReference type="MalaCards" id="ADPGK"/>
<dbReference type="MIM" id="611861">
    <property type="type" value="gene"/>
</dbReference>
<dbReference type="neXtProt" id="NX_Q9BRR6"/>
<dbReference type="OpenTargets" id="ENSG00000159322"/>
<dbReference type="PharmGKB" id="PA134971928"/>
<dbReference type="VEuPathDB" id="HostDB:ENSG00000159322"/>
<dbReference type="eggNOG" id="KOG4184">
    <property type="taxonomic scope" value="Eukaryota"/>
</dbReference>
<dbReference type="GeneTree" id="ENSGT00390000017953"/>
<dbReference type="HOGENOM" id="CLU_032362_0_0_1"/>
<dbReference type="InParanoid" id="Q9BRR6"/>
<dbReference type="OMA" id="FIHYMGR"/>
<dbReference type="OrthoDB" id="5847021at2759"/>
<dbReference type="PAN-GO" id="Q9BRR6">
    <property type="GO annotations" value="3 GO annotations based on evolutionary models"/>
</dbReference>
<dbReference type="PhylomeDB" id="Q9BRR6"/>
<dbReference type="TreeFam" id="TF313401"/>
<dbReference type="BRENDA" id="2.7.1.147">
    <property type="organism ID" value="2681"/>
</dbReference>
<dbReference type="PathwayCommons" id="Q9BRR6"/>
<dbReference type="Reactome" id="R-HSA-70171">
    <property type="pathway name" value="Glycolysis"/>
</dbReference>
<dbReference type="SABIO-RK" id="Q9BRR6"/>
<dbReference type="SignaLink" id="Q9BRR6"/>
<dbReference type="UniPathway" id="UPA00109"/>
<dbReference type="BioGRID-ORCS" id="83440">
    <property type="hits" value="16 hits in 1153 CRISPR screens"/>
</dbReference>
<dbReference type="ChiTaRS" id="ADPGK">
    <property type="organism name" value="human"/>
</dbReference>
<dbReference type="GeneWiki" id="ADP-specific_glucokinase"/>
<dbReference type="GenomeRNAi" id="83440"/>
<dbReference type="Pharos" id="Q9BRR6">
    <property type="development level" value="Tbio"/>
</dbReference>
<dbReference type="PRO" id="PR:Q9BRR6"/>
<dbReference type="Proteomes" id="UP000005640">
    <property type="component" value="Chromosome 15"/>
</dbReference>
<dbReference type="RNAct" id="Q9BRR6">
    <property type="molecule type" value="protein"/>
</dbReference>
<dbReference type="Bgee" id="ENSG00000159322">
    <property type="expression patterns" value="Expressed in oocyte and 177 other cell types or tissues"/>
</dbReference>
<dbReference type="ExpressionAtlas" id="Q9BRR6">
    <property type="expression patterns" value="baseline and differential"/>
</dbReference>
<dbReference type="GO" id="GO:0005783">
    <property type="term" value="C:endoplasmic reticulum"/>
    <property type="evidence" value="ECO:0000314"/>
    <property type="project" value="CACAO"/>
</dbReference>
<dbReference type="GO" id="GO:0005789">
    <property type="term" value="C:endoplasmic reticulum membrane"/>
    <property type="evidence" value="ECO:0000304"/>
    <property type="project" value="Reactome"/>
</dbReference>
<dbReference type="GO" id="GO:0005576">
    <property type="term" value="C:extracellular region"/>
    <property type="evidence" value="ECO:0007669"/>
    <property type="project" value="UniProtKB-SubCell"/>
</dbReference>
<dbReference type="GO" id="GO:0016020">
    <property type="term" value="C:membrane"/>
    <property type="evidence" value="ECO:0007005"/>
    <property type="project" value="UniProtKB"/>
</dbReference>
<dbReference type="GO" id="GO:0043843">
    <property type="term" value="F:ADP-specific glucokinase activity"/>
    <property type="evidence" value="ECO:0000314"/>
    <property type="project" value="MGI"/>
</dbReference>
<dbReference type="GO" id="GO:0046872">
    <property type="term" value="F:metal ion binding"/>
    <property type="evidence" value="ECO:0007669"/>
    <property type="project" value="UniProtKB-KW"/>
</dbReference>
<dbReference type="GO" id="GO:0006006">
    <property type="term" value="P:glucose metabolic process"/>
    <property type="evidence" value="ECO:0000314"/>
    <property type="project" value="MGI"/>
</dbReference>
<dbReference type="GO" id="GO:0061620">
    <property type="term" value="P:glycolytic process through glucose-6-phosphate"/>
    <property type="evidence" value="ECO:0000304"/>
    <property type="project" value="Reactome"/>
</dbReference>
<dbReference type="CDD" id="cd01938">
    <property type="entry name" value="ADPGK_ADPPFK"/>
    <property type="match status" value="1"/>
</dbReference>
<dbReference type="FunFam" id="3.40.1190.20:FF:000020">
    <property type="entry name" value="ADP-dependent glucokinase isoform X1"/>
    <property type="match status" value="1"/>
</dbReference>
<dbReference type="Gene3D" id="3.40.1190.20">
    <property type="match status" value="1"/>
</dbReference>
<dbReference type="InterPro" id="IPR007666">
    <property type="entry name" value="ADP_PFK/GK"/>
</dbReference>
<dbReference type="InterPro" id="IPR029056">
    <property type="entry name" value="Ribokinase-like"/>
</dbReference>
<dbReference type="PANTHER" id="PTHR21208">
    <property type="entry name" value="ADP-DEPENDENT GLUCOKINASE"/>
    <property type="match status" value="1"/>
</dbReference>
<dbReference type="PANTHER" id="PTHR21208:SF0">
    <property type="entry name" value="ADP-DEPENDENT GLUCOKINASE"/>
    <property type="match status" value="1"/>
</dbReference>
<dbReference type="Pfam" id="PF04587">
    <property type="entry name" value="ADP_PFK_GK"/>
    <property type="match status" value="1"/>
</dbReference>
<dbReference type="SUPFAM" id="SSF53613">
    <property type="entry name" value="Ribokinase-like"/>
    <property type="match status" value="1"/>
</dbReference>
<dbReference type="PROSITE" id="PS51255">
    <property type="entry name" value="ADPK"/>
    <property type="match status" value="1"/>
</dbReference>
<accession>Q9BRR6</accession>
<accession>Q49AU7</accession>
<accession>Q8NBI1</accession>
<accession>Q8WZ90</accession>
<accession>Q96NF8</accession>
<accession>Q9H0A7</accession>
<protein>
    <recommendedName>
        <fullName>ADP-dependent glucokinase</fullName>
        <shortName>ADP-GK</shortName>
        <shortName>ADPGK</shortName>
        <ecNumber>2.7.1.147</ecNumber>
    </recommendedName>
    <alternativeName>
        <fullName>RbBP-35</fullName>
    </alternativeName>
</protein>
<gene>
    <name type="primary">ADPGK</name>
    <name type="ORF">PSEC0260</name>
</gene>
<proteinExistence type="evidence at protein level"/>
<feature type="signal peptide" evidence="2">
    <location>
        <begin position="1"/>
        <end position="22"/>
    </location>
</feature>
<feature type="chain" id="PRO_0000184776" description="ADP-dependent glucokinase">
    <location>
        <begin position="23"/>
        <end position="497"/>
    </location>
</feature>
<feature type="domain" description="ADPK" evidence="3">
    <location>
        <begin position="52"/>
        <end position="497"/>
    </location>
</feature>
<feature type="active site" description="Proton acceptor" evidence="3">
    <location>
        <position position="481"/>
    </location>
</feature>
<feature type="binding site" evidence="3">
    <location>
        <position position="297"/>
    </location>
    <ligand>
        <name>Mg(2+)</name>
        <dbReference type="ChEBI" id="CHEBI:18420"/>
    </ligand>
</feature>
<feature type="binding site" evidence="3">
    <location>
        <position position="328"/>
    </location>
    <ligand>
        <name>Mg(2+)</name>
        <dbReference type="ChEBI" id="CHEBI:18420"/>
    </ligand>
</feature>
<feature type="binding site" evidence="3">
    <location>
        <position position="481"/>
    </location>
    <ligand>
        <name>Mg(2+)</name>
        <dbReference type="ChEBI" id="CHEBI:18420"/>
    </ligand>
</feature>
<feature type="splice variant" id="VSP_013550" description="In isoform 4." evidence="4 9">
    <location>
        <begin position="1"/>
        <end position="274"/>
    </location>
</feature>
<feature type="splice variant" id="VSP_013549" description="In isoform 3." evidence="5">
    <location>
        <begin position="1"/>
        <end position="239"/>
    </location>
</feature>
<feature type="splice variant" id="VSP_013548" description="In isoform 5." evidence="8">
    <location>
        <begin position="1"/>
        <end position="122"/>
    </location>
</feature>
<feature type="splice variant" id="VSP_035014" description="In isoform 6." evidence="6">
    <location>
        <begin position="79"/>
        <end position="497"/>
    </location>
</feature>
<feature type="splice variant" id="VSP_013551" description="In isoform 4." evidence="4 9">
    <original>RKRLLE</original>
    <variation>MAASCR</variation>
    <location>
        <begin position="275"/>
        <end position="280"/>
    </location>
</feature>
<feature type="splice variant" id="VSP_013552" description="In isoform 2 and isoform 4." evidence="4 7 9">
    <location>
        <position position="313"/>
    </location>
</feature>
<feature type="splice variant" id="VSP_013553" description="In isoform 5." evidence="8">
    <original>AAGARVAGTQACATETIDTSRVSLRAPQEFMTSHSEAGSRIVLNPNKPVVEWHREGISFHFTPVLV</original>
    <variation>LGSSCGWDTGLRHRNHRHQPSVSEGTPRVHDFPFGGRLQDCIKPKQASSRMAQRGNILPLHTSIGV</variation>
    <location>
        <begin position="404"/>
        <end position="469"/>
    </location>
</feature>
<feature type="splice variant" id="VSP_013554" description="In isoform 5." evidence="8">
    <location>
        <begin position="470"/>
        <end position="497"/>
    </location>
</feature>
<feature type="sequence variant" id="VAR_060085" description="In dbSNP:rs8024644.">
    <original>K</original>
    <variation>R</variation>
    <location>
        <position position="184"/>
    </location>
</feature>
<name>ADPGK_HUMAN</name>
<organism>
    <name type="scientific">Homo sapiens</name>
    <name type="common">Human</name>
    <dbReference type="NCBI Taxonomy" id="9606"/>
    <lineage>
        <taxon>Eukaryota</taxon>
        <taxon>Metazoa</taxon>
        <taxon>Chordata</taxon>
        <taxon>Craniata</taxon>
        <taxon>Vertebrata</taxon>
        <taxon>Euteleostomi</taxon>
        <taxon>Mammalia</taxon>
        <taxon>Eutheria</taxon>
        <taxon>Euarchontoglires</taxon>
        <taxon>Primates</taxon>
        <taxon>Haplorrhini</taxon>
        <taxon>Catarrhini</taxon>
        <taxon>Hominidae</taxon>
        <taxon>Homo</taxon>
    </lineage>
</organism>
<sequence length="497" mass="54089">MALWRGSAYAGFLALAVGCVFLLEPELPGSALRSLWSSLCLGPAPAPPGPVSPEGRLAAAWDALIVRPVRRWRRVAVGVNACVDVVLSGVKLLQALGLSPGNGKDHSILHSRNDLEEAFIHFMGKGAAAERFFSDKETFHDIAQVASEFPGAQHYVGGNAALIGQKFAANSDLKVLLCGPVGPKLHELLDDNVFVPPESLQEVDEFHLILEYQAGEEWGQLKAPHANRFIFSHDLSNGAMNMLEVFVSSLEEFQPDLVVLSGLHMMEGQSKELQRKRLLEVVTSISDIPTGIPVHLELASMTNRELMSSIVHQQVFPAVTSLGLNEQELLFLTQSASGPHSSLSSWNGVPDVGMVSDILFWILKEHGRSKSRASDLTRIHFHTLVYHILATVDGHWANQLAAVAAGARVAGTQACATETIDTSRVSLRAPQEFMTSHSEAGSRIVLNPNKPVVEWHREGISFHFTPVLVCKDPIRTVGLGDAISAEGLFYSEVHPHY</sequence>
<evidence type="ECO:0000250" key="1"/>
<evidence type="ECO:0000255" key="2"/>
<evidence type="ECO:0000255" key="3">
    <source>
        <dbReference type="PROSITE-ProRule" id="PRU00584"/>
    </source>
</evidence>
<evidence type="ECO:0000303" key="4">
    <source>
    </source>
</evidence>
<evidence type="ECO:0000303" key="5">
    <source>
    </source>
</evidence>
<evidence type="ECO:0000303" key="6">
    <source>
    </source>
</evidence>
<evidence type="ECO:0000303" key="7">
    <source>
    </source>
</evidence>
<evidence type="ECO:0000303" key="8">
    <source ref="1"/>
</evidence>
<evidence type="ECO:0000303" key="9">
    <source ref="4"/>
</evidence>
<evidence type="ECO:0000305" key="10"/>